<accession>B1J5D5</accession>
<protein>
    <recommendedName>
        <fullName evidence="1">Ribosomal RNA large subunit methyltransferase M</fullName>
        <ecNumber evidence="1">2.1.1.186</ecNumber>
    </recommendedName>
    <alternativeName>
        <fullName evidence="1">23S rRNA (cytidine2498-2'-O)-methyltransferase</fullName>
    </alternativeName>
    <alternativeName>
        <fullName evidence="1">23S rRNA 2'-O-ribose methyltransferase RlmM</fullName>
    </alternativeName>
</protein>
<proteinExistence type="inferred from homology"/>
<reference key="1">
    <citation type="submission" date="2008-02" db="EMBL/GenBank/DDBJ databases">
        <title>Complete sequence of Pseudomonas putida W619.</title>
        <authorList>
            <person name="Copeland A."/>
            <person name="Lucas S."/>
            <person name="Lapidus A."/>
            <person name="Barry K."/>
            <person name="Detter J.C."/>
            <person name="Glavina del Rio T."/>
            <person name="Dalin E."/>
            <person name="Tice H."/>
            <person name="Pitluck S."/>
            <person name="Chain P."/>
            <person name="Malfatti S."/>
            <person name="Shin M."/>
            <person name="Vergez L."/>
            <person name="Schmutz J."/>
            <person name="Larimer F."/>
            <person name="Land M."/>
            <person name="Hauser L."/>
            <person name="Kyrpides N."/>
            <person name="Kim E."/>
            <person name="Taghavi S."/>
            <person name="Vangronsveld D."/>
            <person name="van der Lelie D."/>
            <person name="Richardson P."/>
        </authorList>
    </citation>
    <scope>NUCLEOTIDE SEQUENCE [LARGE SCALE GENOMIC DNA]</scope>
    <source>
        <strain>W619</strain>
    </source>
</reference>
<gene>
    <name evidence="1" type="primary">rlmM</name>
    <name type="ordered locus">PputW619_1632</name>
</gene>
<keyword id="KW-0963">Cytoplasm</keyword>
<keyword id="KW-0489">Methyltransferase</keyword>
<keyword id="KW-0698">rRNA processing</keyword>
<keyword id="KW-0949">S-adenosyl-L-methionine</keyword>
<keyword id="KW-0808">Transferase</keyword>
<organism>
    <name type="scientific">Pseudomonas putida (strain W619)</name>
    <dbReference type="NCBI Taxonomy" id="390235"/>
    <lineage>
        <taxon>Bacteria</taxon>
        <taxon>Pseudomonadati</taxon>
        <taxon>Pseudomonadota</taxon>
        <taxon>Gammaproteobacteria</taxon>
        <taxon>Pseudomonadales</taxon>
        <taxon>Pseudomonadaceae</taxon>
        <taxon>Pseudomonas</taxon>
    </lineage>
</organism>
<dbReference type="EC" id="2.1.1.186" evidence="1"/>
<dbReference type="EMBL" id="CP000949">
    <property type="protein sequence ID" value="ACA72137.1"/>
    <property type="molecule type" value="Genomic_DNA"/>
</dbReference>
<dbReference type="SMR" id="B1J5D5"/>
<dbReference type="STRING" id="390235.PputW619_1632"/>
<dbReference type="KEGG" id="ppw:PputW619_1632"/>
<dbReference type="eggNOG" id="COG2933">
    <property type="taxonomic scope" value="Bacteria"/>
</dbReference>
<dbReference type="HOGENOM" id="CLU_043780_0_0_6"/>
<dbReference type="OrthoDB" id="154490at2"/>
<dbReference type="GO" id="GO:0005737">
    <property type="term" value="C:cytoplasm"/>
    <property type="evidence" value="ECO:0007669"/>
    <property type="project" value="UniProtKB-SubCell"/>
</dbReference>
<dbReference type="GO" id="GO:0008757">
    <property type="term" value="F:S-adenosylmethionine-dependent methyltransferase activity"/>
    <property type="evidence" value="ECO:0007669"/>
    <property type="project" value="UniProtKB-UniRule"/>
</dbReference>
<dbReference type="GO" id="GO:0032259">
    <property type="term" value="P:methylation"/>
    <property type="evidence" value="ECO:0007669"/>
    <property type="project" value="UniProtKB-KW"/>
</dbReference>
<dbReference type="GO" id="GO:0006364">
    <property type="term" value="P:rRNA processing"/>
    <property type="evidence" value="ECO:0007669"/>
    <property type="project" value="UniProtKB-UniRule"/>
</dbReference>
<dbReference type="Gene3D" id="3.30.2300.20">
    <property type="match status" value="1"/>
</dbReference>
<dbReference type="Gene3D" id="3.30.70.2810">
    <property type="match status" value="1"/>
</dbReference>
<dbReference type="Gene3D" id="3.40.50.150">
    <property type="entry name" value="Vaccinia Virus protein VP39"/>
    <property type="match status" value="1"/>
</dbReference>
<dbReference type="HAMAP" id="MF_01551">
    <property type="entry name" value="23SrRNA_methyltr_M"/>
    <property type="match status" value="1"/>
</dbReference>
<dbReference type="InterPro" id="IPR040739">
    <property type="entry name" value="RlmM_FDX"/>
</dbReference>
<dbReference type="InterPro" id="IPR048646">
    <property type="entry name" value="RlmM_THUMP-like"/>
</dbReference>
<dbReference type="InterPro" id="IPR002877">
    <property type="entry name" value="RNA_MeTrfase_FtsJ_dom"/>
</dbReference>
<dbReference type="InterPro" id="IPR011224">
    <property type="entry name" value="rRNA_MeTrfase_M"/>
</dbReference>
<dbReference type="InterPro" id="IPR029063">
    <property type="entry name" value="SAM-dependent_MTases_sf"/>
</dbReference>
<dbReference type="NCBIfam" id="NF008734">
    <property type="entry name" value="PRK11760.1"/>
    <property type="match status" value="1"/>
</dbReference>
<dbReference type="PANTHER" id="PTHR37524">
    <property type="entry name" value="RIBOSOMAL RNA LARGE SUBUNIT METHYLTRANSFERASE M"/>
    <property type="match status" value="1"/>
</dbReference>
<dbReference type="PANTHER" id="PTHR37524:SF2">
    <property type="entry name" value="RIBOSOMAL RNA METHYLTRANSFERASE FTSJ DOMAIN-CONTAINING PROTEIN"/>
    <property type="match status" value="1"/>
</dbReference>
<dbReference type="Pfam" id="PF01728">
    <property type="entry name" value="FtsJ"/>
    <property type="match status" value="1"/>
</dbReference>
<dbReference type="Pfam" id="PF18125">
    <property type="entry name" value="RlmM_FDX"/>
    <property type="match status" value="1"/>
</dbReference>
<dbReference type="Pfam" id="PF21239">
    <property type="entry name" value="RLMM_N"/>
    <property type="match status" value="1"/>
</dbReference>
<dbReference type="PIRSF" id="PIRSF028774">
    <property type="entry name" value="UCP028774"/>
    <property type="match status" value="1"/>
</dbReference>
<dbReference type="SUPFAM" id="SSF53335">
    <property type="entry name" value="S-adenosyl-L-methionine-dependent methyltransferases"/>
    <property type="match status" value="1"/>
</dbReference>
<feature type="chain" id="PRO_1000201524" description="Ribosomal RNA large subunit methyltransferase M">
    <location>
        <begin position="1"/>
        <end position="355"/>
    </location>
</feature>
<feature type="active site" description="Proton acceptor" evidence="1">
    <location>
        <position position="300"/>
    </location>
</feature>
<feature type="binding site" evidence="1">
    <location>
        <position position="183"/>
    </location>
    <ligand>
        <name>S-adenosyl-L-methionine</name>
        <dbReference type="ChEBI" id="CHEBI:59789"/>
    </ligand>
</feature>
<feature type="binding site" evidence="1">
    <location>
        <begin position="216"/>
        <end position="219"/>
    </location>
    <ligand>
        <name>S-adenosyl-L-methionine</name>
        <dbReference type="ChEBI" id="CHEBI:59789"/>
    </ligand>
</feature>
<feature type="binding site" evidence="1">
    <location>
        <position position="235"/>
    </location>
    <ligand>
        <name>S-adenosyl-L-methionine</name>
        <dbReference type="ChEBI" id="CHEBI:59789"/>
    </ligand>
</feature>
<feature type="binding site" evidence="1">
    <location>
        <position position="255"/>
    </location>
    <ligand>
        <name>S-adenosyl-L-methionine</name>
        <dbReference type="ChEBI" id="CHEBI:59789"/>
    </ligand>
</feature>
<feature type="binding site" evidence="1">
    <location>
        <position position="271"/>
    </location>
    <ligand>
        <name>S-adenosyl-L-methionine</name>
        <dbReference type="ChEBI" id="CHEBI:59789"/>
    </ligand>
</feature>
<name>RLMM_PSEPW</name>
<evidence type="ECO:0000255" key="1">
    <source>
        <dbReference type="HAMAP-Rule" id="MF_01551"/>
    </source>
</evidence>
<sequence length="355" mass="40220">MNTLFMHCRPGFEGEVCAEISEHAARLGVAGYAKGKPQSACAEFVCAEAEGAERLMAQLRFAQLIFPRQWARGSYIELPETDRISVLLEHLAALPVFGSLWLEVLDSNDGKELSTFCRKFEVPLRKALEKAGRLVDNASLPRLLLTFISGRRVFVGVAEANNSALWPMGIPRLKFPREAPSRSTLKLEEAWHQFIPREQWEQRLGDDMTGVDLGASPGGWTYQLVRRGMLVTAIDNGPMAESLMDTGLVQHLMADGFTWQPKQPVDWMVCDIVEKPARTTSLIETWLGEGLCREAVVNLKLPMKQRYAEVRRLLDRMEATFKARKLKVSIACKQLYHDREEVTCHLRRLDLKPRK</sequence>
<comment type="function">
    <text evidence="1">Catalyzes the 2'-O-methylation at nucleotide C2498 in 23S rRNA.</text>
</comment>
<comment type="catalytic activity">
    <reaction evidence="1">
        <text>cytidine(2498) in 23S rRNA + S-adenosyl-L-methionine = 2'-O-methylcytidine(2498) in 23S rRNA + S-adenosyl-L-homocysteine + H(+)</text>
        <dbReference type="Rhea" id="RHEA:42788"/>
        <dbReference type="Rhea" id="RHEA-COMP:10244"/>
        <dbReference type="Rhea" id="RHEA-COMP:10245"/>
        <dbReference type="ChEBI" id="CHEBI:15378"/>
        <dbReference type="ChEBI" id="CHEBI:57856"/>
        <dbReference type="ChEBI" id="CHEBI:59789"/>
        <dbReference type="ChEBI" id="CHEBI:74495"/>
        <dbReference type="ChEBI" id="CHEBI:82748"/>
        <dbReference type="EC" id="2.1.1.186"/>
    </reaction>
</comment>
<comment type="subunit">
    <text evidence="1">Monomer.</text>
</comment>
<comment type="subcellular location">
    <subcellularLocation>
        <location evidence="1">Cytoplasm</location>
    </subcellularLocation>
</comment>
<comment type="similarity">
    <text evidence="1">Belongs to the class I-like SAM-binding methyltransferase superfamily. RNA methyltransferase RlmE family. RlmM subfamily.</text>
</comment>